<organismHost>
    <name type="scientific">Homo sapiens</name>
    <name type="common">Human</name>
    <dbReference type="NCBI Taxonomy" id="9606"/>
</organismHost>
<accession>Q9QJ50</accession>
<protein>
    <recommendedName>
        <fullName>Uncharacterized protein U13</fullName>
    </recommendedName>
</protein>
<organism>
    <name type="scientific">Human herpesvirus 6B (strain Z29)</name>
    <name type="common">HHV-6 variant B</name>
    <name type="synonym">Human B lymphotropic virus</name>
    <dbReference type="NCBI Taxonomy" id="36351"/>
    <lineage>
        <taxon>Viruses</taxon>
        <taxon>Duplodnaviria</taxon>
        <taxon>Heunggongvirae</taxon>
        <taxon>Peploviricota</taxon>
        <taxon>Herviviricetes</taxon>
        <taxon>Herpesvirales</taxon>
        <taxon>Orthoherpesviridae</taxon>
        <taxon>Betaherpesvirinae</taxon>
        <taxon>Roseolovirus</taxon>
        <taxon>Roseolovirus humanbeta6b</taxon>
        <taxon>Human herpesvirus 6B</taxon>
    </lineage>
</organism>
<name>U13_HHV6Z</name>
<feature type="chain" id="PRO_0000408418" description="Uncharacterized protein U13">
    <location>
        <begin position="1"/>
        <end position="107"/>
    </location>
</feature>
<reference key="1">
    <citation type="journal article" date="1999" name="J. Virol.">
        <title>Human herpesvirus 6B genome sequence: coding content and comparison with human herpesvirus 6A.</title>
        <authorList>
            <person name="Dominguez G."/>
            <person name="Dambaugh T.R."/>
            <person name="Stamey F.R."/>
            <person name="Dewhurst S."/>
            <person name="Inoue N."/>
            <person name="Pellett P.E."/>
        </authorList>
    </citation>
    <scope>NUCLEOTIDE SEQUENCE [LARGE SCALE GENOMIC DNA]</scope>
</reference>
<sequence length="107" mass="12019">MAHAKKQARRKLLTSTDDPILSSTFTMRPTSKIADAEIISREHDYIASKTQADSKKKLSSLSVIFDKTVLFEFYGIGDNNEKAIVYPIDPDFLLCDSENNCTLSPFL</sequence>
<keyword id="KW-1185">Reference proteome</keyword>
<gene>
    <name type="primary">U13</name>
</gene>
<proteinExistence type="predicted"/>
<dbReference type="EMBL" id="AF157706">
    <property type="protein sequence ID" value="AAD49628.1"/>
    <property type="molecule type" value="Genomic_DNA"/>
</dbReference>
<dbReference type="RefSeq" id="NP_050194.1">
    <property type="nucleotide sequence ID" value="NC_000898.1"/>
</dbReference>
<dbReference type="DNASU" id="1497012"/>
<dbReference type="GeneID" id="1497012"/>
<dbReference type="KEGG" id="vg:1497012"/>
<dbReference type="Proteomes" id="UP000006930">
    <property type="component" value="Segment"/>
</dbReference>